<comment type="PTM">
    <text evidence="1">The N-terminus is cleaved by ribosomal processing cysteine protease Prp.</text>
</comment>
<comment type="similarity">
    <text evidence="2">Belongs to the bacterial ribosomal protein bL27 family.</text>
</comment>
<evidence type="ECO:0000250" key="1">
    <source>
        <dbReference type="UniProtKB" id="Q2FXT0"/>
    </source>
</evidence>
<evidence type="ECO:0000255" key="2">
    <source>
        <dbReference type="HAMAP-Rule" id="MF_00539"/>
    </source>
</evidence>
<evidence type="ECO:0000256" key="3">
    <source>
        <dbReference type="SAM" id="MobiDB-lite"/>
    </source>
</evidence>
<evidence type="ECO:0000305" key="4"/>
<name>RL27_STRSY</name>
<gene>
    <name evidence="2" type="primary">rpmA</name>
    <name type="ordered locus">SSU05_0782</name>
</gene>
<proteinExistence type="inferred from homology"/>
<reference key="1">
    <citation type="journal article" date="2007" name="PLoS ONE">
        <title>A glimpse of streptococcal toxic shock syndrome from comparative genomics of S. suis 2 Chinese isolates.</title>
        <authorList>
            <person name="Chen C."/>
            <person name="Tang J."/>
            <person name="Dong W."/>
            <person name="Wang C."/>
            <person name="Feng Y."/>
            <person name="Wang J."/>
            <person name="Zheng F."/>
            <person name="Pan X."/>
            <person name="Liu D."/>
            <person name="Li M."/>
            <person name="Song Y."/>
            <person name="Zhu X."/>
            <person name="Sun H."/>
            <person name="Feng T."/>
            <person name="Guo Z."/>
            <person name="Ju A."/>
            <person name="Ge J."/>
            <person name="Dong Y."/>
            <person name="Sun W."/>
            <person name="Jiang Y."/>
            <person name="Wang J."/>
            <person name="Yan J."/>
            <person name="Yang H."/>
            <person name="Wang X."/>
            <person name="Gao G.F."/>
            <person name="Yang R."/>
            <person name="Wang J."/>
            <person name="Yu J."/>
        </authorList>
    </citation>
    <scope>NUCLEOTIDE SEQUENCE [LARGE SCALE GENOMIC DNA]</scope>
    <source>
        <strain>05ZYH33</strain>
    </source>
</reference>
<dbReference type="EMBL" id="CP000407">
    <property type="protein sequence ID" value="ABP89748.1"/>
    <property type="molecule type" value="Genomic_DNA"/>
</dbReference>
<dbReference type="SMR" id="A4VUF9"/>
<dbReference type="STRING" id="391295.SSU05_0782"/>
<dbReference type="KEGG" id="ssu:SSU05_0782"/>
<dbReference type="eggNOG" id="COG0211">
    <property type="taxonomic scope" value="Bacteria"/>
</dbReference>
<dbReference type="HOGENOM" id="CLU_095424_4_0_9"/>
<dbReference type="GO" id="GO:0022625">
    <property type="term" value="C:cytosolic large ribosomal subunit"/>
    <property type="evidence" value="ECO:0007669"/>
    <property type="project" value="TreeGrafter"/>
</dbReference>
<dbReference type="GO" id="GO:0003735">
    <property type="term" value="F:structural constituent of ribosome"/>
    <property type="evidence" value="ECO:0007669"/>
    <property type="project" value="InterPro"/>
</dbReference>
<dbReference type="GO" id="GO:0006412">
    <property type="term" value="P:translation"/>
    <property type="evidence" value="ECO:0007669"/>
    <property type="project" value="UniProtKB-UniRule"/>
</dbReference>
<dbReference type="FunFam" id="2.40.50.100:FF:000004">
    <property type="entry name" value="50S ribosomal protein L27"/>
    <property type="match status" value="1"/>
</dbReference>
<dbReference type="Gene3D" id="2.40.50.100">
    <property type="match status" value="1"/>
</dbReference>
<dbReference type="HAMAP" id="MF_00539">
    <property type="entry name" value="Ribosomal_bL27"/>
    <property type="match status" value="1"/>
</dbReference>
<dbReference type="InterPro" id="IPR001684">
    <property type="entry name" value="Ribosomal_bL27"/>
</dbReference>
<dbReference type="InterPro" id="IPR018261">
    <property type="entry name" value="Ribosomal_bL27_CS"/>
</dbReference>
<dbReference type="NCBIfam" id="TIGR00062">
    <property type="entry name" value="L27"/>
    <property type="match status" value="1"/>
</dbReference>
<dbReference type="PANTHER" id="PTHR15893:SF0">
    <property type="entry name" value="LARGE RIBOSOMAL SUBUNIT PROTEIN BL27M"/>
    <property type="match status" value="1"/>
</dbReference>
<dbReference type="PANTHER" id="PTHR15893">
    <property type="entry name" value="RIBOSOMAL PROTEIN L27"/>
    <property type="match status" value="1"/>
</dbReference>
<dbReference type="Pfam" id="PF01016">
    <property type="entry name" value="Ribosomal_L27"/>
    <property type="match status" value="1"/>
</dbReference>
<dbReference type="PRINTS" id="PR00063">
    <property type="entry name" value="RIBOSOMALL27"/>
</dbReference>
<dbReference type="SUPFAM" id="SSF110324">
    <property type="entry name" value="Ribosomal L27 protein-like"/>
    <property type="match status" value="1"/>
</dbReference>
<dbReference type="PROSITE" id="PS00831">
    <property type="entry name" value="RIBOSOMAL_L27"/>
    <property type="match status" value="1"/>
</dbReference>
<accession>A4VUF9</accession>
<keyword id="KW-0687">Ribonucleoprotein</keyword>
<keyword id="KW-0689">Ribosomal protein</keyword>
<organism>
    <name type="scientific">Streptococcus suis (strain 05ZYH33)</name>
    <dbReference type="NCBI Taxonomy" id="391295"/>
    <lineage>
        <taxon>Bacteria</taxon>
        <taxon>Bacillati</taxon>
        <taxon>Bacillota</taxon>
        <taxon>Bacilli</taxon>
        <taxon>Lactobacillales</taxon>
        <taxon>Streptococcaceae</taxon>
        <taxon>Streptococcus</taxon>
    </lineage>
</organism>
<sequence>MLNLNLANLQFMAHKKGGGSTSNGRDSQAKRLGAKAADGQTVSGGSILYRQRGTKIYPGANVGRGGDDTLYAKVEGVVRFERKGRDKKQVSVYPIAK</sequence>
<feature type="propeptide" id="PRO_0000459967" evidence="1">
    <location>
        <begin position="1"/>
        <end position="12"/>
    </location>
</feature>
<feature type="chain" id="PRO_1000017625" description="Large ribosomal subunit protein bL27">
    <location>
        <begin position="13"/>
        <end position="97"/>
    </location>
</feature>
<feature type="region of interest" description="Disordered" evidence="3">
    <location>
        <begin position="15"/>
        <end position="37"/>
    </location>
</feature>
<protein>
    <recommendedName>
        <fullName evidence="2">Large ribosomal subunit protein bL27</fullName>
    </recommendedName>
    <alternativeName>
        <fullName evidence="4">50S ribosomal protein L27</fullName>
    </alternativeName>
</protein>